<dbReference type="EC" id="3.6.1.7" evidence="1"/>
<dbReference type="EMBL" id="CR761924">
    <property type="protein sequence ID" value="CAJ82983.1"/>
    <property type="molecule type" value="mRNA"/>
</dbReference>
<dbReference type="RefSeq" id="NP_001016160.1">
    <property type="nucleotide sequence ID" value="NM_001016160.2"/>
</dbReference>
<dbReference type="RefSeq" id="XP_012823824.1">
    <property type="nucleotide sequence ID" value="XM_012968370.2"/>
</dbReference>
<dbReference type="SMR" id="Q28FK7"/>
<dbReference type="FunCoup" id="Q28FK7">
    <property type="interactions" value="103"/>
</dbReference>
<dbReference type="STRING" id="8364.ENSXETP00000016924"/>
<dbReference type="PaxDb" id="8364-ENSXETP00000029009"/>
<dbReference type="GeneID" id="548914"/>
<dbReference type="KEGG" id="xtr:548914"/>
<dbReference type="AGR" id="Xenbase:XB-GENE-5909301"/>
<dbReference type="CTD" id="97"/>
<dbReference type="Xenbase" id="XB-GENE-5909301">
    <property type="gene designation" value="acyp1"/>
</dbReference>
<dbReference type="eggNOG" id="KOG3360">
    <property type="taxonomic scope" value="Eukaryota"/>
</dbReference>
<dbReference type="HOGENOM" id="CLU_141932_0_1_1"/>
<dbReference type="InParanoid" id="Q28FK7"/>
<dbReference type="OMA" id="PLNEMKH"/>
<dbReference type="OrthoDB" id="7961613at2759"/>
<dbReference type="PhylomeDB" id="Q28FK7"/>
<dbReference type="Proteomes" id="UP000008143">
    <property type="component" value="Chromosome 8"/>
</dbReference>
<dbReference type="Bgee" id="ENSXETG00000040528">
    <property type="expression patterns" value="Expressed in testis and 12 other cell types or tissues"/>
</dbReference>
<dbReference type="GO" id="GO:0003998">
    <property type="term" value="F:acylphosphatase activity"/>
    <property type="evidence" value="ECO:0007669"/>
    <property type="project" value="UniProtKB-EC"/>
</dbReference>
<dbReference type="FunFam" id="3.30.70.100:FF:000011">
    <property type="entry name" value="Acylphosphatase"/>
    <property type="match status" value="1"/>
</dbReference>
<dbReference type="Gene3D" id="3.30.70.100">
    <property type="match status" value="1"/>
</dbReference>
<dbReference type="InterPro" id="IPR020456">
    <property type="entry name" value="Acylphosphatase"/>
</dbReference>
<dbReference type="InterPro" id="IPR001792">
    <property type="entry name" value="Acylphosphatase-like_dom"/>
</dbReference>
<dbReference type="InterPro" id="IPR036046">
    <property type="entry name" value="Acylphosphatase-like_dom_sf"/>
</dbReference>
<dbReference type="InterPro" id="IPR017968">
    <property type="entry name" value="Acylphosphatase_CS"/>
</dbReference>
<dbReference type="PANTHER" id="PTHR10029">
    <property type="entry name" value="ACYLPHOSPHATASE"/>
    <property type="match status" value="1"/>
</dbReference>
<dbReference type="PANTHER" id="PTHR10029:SF21">
    <property type="entry name" value="ACYLPHOSPHATASE-1"/>
    <property type="match status" value="1"/>
</dbReference>
<dbReference type="Pfam" id="PF00708">
    <property type="entry name" value="Acylphosphatase"/>
    <property type="match status" value="1"/>
</dbReference>
<dbReference type="PRINTS" id="PR00112">
    <property type="entry name" value="ACYLPHPHTASE"/>
</dbReference>
<dbReference type="SUPFAM" id="SSF54975">
    <property type="entry name" value="Acylphosphatase/BLUF domain-like"/>
    <property type="match status" value="1"/>
</dbReference>
<dbReference type="PROSITE" id="PS00150">
    <property type="entry name" value="ACYLPHOSPHATASE_1"/>
    <property type="match status" value="1"/>
</dbReference>
<dbReference type="PROSITE" id="PS00151">
    <property type="entry name" value="ACYLPHOSPHATASE_2"/>
    <property type="match status" value="1"/>
</dbReference>
<dbReference type="PROSITE" id="PS51160">
    <property type="entry name" value="ACYLPHOSPHATASE_3"/>
    <property type="match status" value="1"/>
</dbReference>
<organism>
    <name type="scientific">Xenopus tropicalis</name>
    <name type="common">Western clawed frog</name>
    <name type="synonym">Silurana tropicalis</name>
    <dbReference type="NCBI Taxonomy" id="8364"/>
    <lineage>
        <taxon>Eukaryota</taxon>
        <taxon>Metazoa</taxon>
        <taxon>Chordata</taxon>
        <taxon>Craniata</taxon>
        <taxon>Vertebrata</taxon>
        <taxon>Euteleostomi</taxon>
        <taxon>Amphibia</taxon>
        <taxon>Batrachia</taxon>
        <taxon>Anura</taxon>
        <taxon>Pipoidea</taxon>
        <taxon>Pipidae</taxon>
        <taxon>Xenopodinae</taxon>
        <taxon>Xenopus</taxon>
        <taxon>Silurana</taxon>
    </lineage>
</organism>
<keyword id="KW-0378">Hydrolase</keyword>
<keyword id="KW-1185">Reference proteome</keyword>
<comment type="catalytic activity">
    <reaction evidence="1">
        <text>an acyl phosphate + H2O = a carboxylate + phosphate + H(+)</text>
        <dbReference type="Rhea" id="RHEA:14965"/>
        <dbReference type="ChEBI" id="CHEBI:15377"/>
        <dbReference type="ChEBI" id="CHEBI:15378"/>
        <dbReference type="ChEBI" id="CHEBI:29067"/>
        <dbReference type="ChEBI" id="CHEBI:43474"/>
        <dbReference type="ChEBI" id="CHEBI:59918"/>
        <dbReference type="EC" id="3.6.1.7"/>
    </reaction>
</comment>
<comment type="similarity">
    <text evidence="3">Belongs to the acylphosphatase family.</text>
</comment>
<name>ACYP1_XENTR</name>
<reference key="1">
    <citation type="submission" date="2006-03" db="EMBL/GenBank/DDBJ databases">
        <authorList>
            <consortium name="Sanger Xenopus tropicalis EST/cDNA project"/>
        </authorList>
    </citation>
    <scope>NUCLEOTIDE SEQUENCE [LARGE SCALE MRNA]</scope>
    <source>
        <tissue>Neurula</tissue>
    </source>
</reference>
<accession>Q28FK7</accession>
<gene>
    <name type="primary">acyp1</name>
    <name type="ORF">TNeu074n10.1</name>
</gene>
<proteinExistence type="inferred from homology"/>
<feature type="chain" id="PRO_0000247515" description="Acylphosphatase-1">
    <location>
        <begin position="1"/>
        <end position="98"/>
    </location>
</feature>
<feature type="domain" description="Acylphosphatase-like" evidence="2">
    <location>
        <begin position="8"/>
        <end position="98"/>
    </location>
</feature>
<feature type="active site" evidence="2">
    <location>
        <position position="23"/>
    </location>
</feature>
<feature type="active site" evidence="2">
    <location>
        <position position="41"/>
    </location>
</feature>
<protein>
    <recommendedName>
        <fullName>Acylphosphatase-1</fullName>
        <ecNumber evidence="1">3.6.1.7</ecNumber>
    </recommendedName>
    <alternativeName>
        <fullName>Acylphosphate phosphohydrolase 1</fullName>
    </alternativeName>
</protein>
<sequence length="98" mass="11263">MAEEEPISVDYEVFGKVQGVFFRKYTQAEGNRLGLVGWVRNTDTGTVTGQLQGPSEKVREMQIWLQKKGSPKSRITKAQFQNERRIKKLEHSTFSICK</sequence>
<evidence type="ECO:0000250" key="1">
    <source>
        <dbReference type="UniProtKB" id="P07311"/>
    </source>
</evidence>
<evidence type="ECO:0000255" key="2">
    <source>
        <dbReference type="PROSITE-ProRule" id="PRU00520"/>
    </source>
</evidence>
<evidence type="ECO:0000305" key="3"/>